<name>PSRP_PSEA6</name>
<sequence>MRTAYYISDGTAITSEVFGHALLSLFTIEFEHITVPFVETEEQAKQVVKKISESFQDDGQRPLVFYTIVNTEVRKIISKSVGINYNFLDQFVAPLEIVLGVPSKPEKHRTHSIHEKTYDIRIEAVNYALANDDGSNLQEYDEADIILVGVSRSGKTPTSLYLALQYGIKAANYPFTEEDMGDILKMPPALKRYKDKMFGLTIEAQRLHQIRSERRANSRYASLQQCRMELREVENLYRKEKIPFLNSTRYSIEEISAKILATTGLQRKKY</sequence>
<feature type="chain" id="PRO_0000316714" description="Putative phosphoenolpyruvate synthase regulatory protein">
    <location>
        <begin position="1"/>
        <end position="270"/>
    </location>
</feature>
<feature type="binding site" evidence="1">
    <location>
        <begin position="149"/>
        <end position="156"/>
    </location>
    <ligand>
        <name>ADP</name>
        <dbReference type="ChEBI" id="CHEBI:456216"/>
    </ligand>
</feature>
<dbReference type="EC" id="2.7.11.33" evidence="1"/>
<dbReference type="EC" id="2.7.4.28" evidence="1"/>
<dbReference type="EMBL" id="CP000388">
    <property type="protein sequence ID" value="ABG40264.1"/>
    <property type="molecule type" value="Genomic_DNA"/>
</dbReference>
<dbReference type="RefSeq" id="WP_011574565.1">
    <property type="nucleotide sequence ID" value="NC_008228.1"/>
</dbReference>
<dbReference type="SMR" id="Q15V24"/>
<dbReference type="STRING" id="342610.Patl_1743"/>
<dbReference type="KEGG" id="pat:Patl_1743"/>
<dbReference type="eggNOG" id="COG1806">
    <property type="taxonomic scope" value="Bacteria"/>
</dbReference>
<dbReference type="HOGENOM" id="CLU_046206_1_0_6"/>
<dbReference type="OrthoDB" id="9782201at2"/>
<dbReference type="Proteomes" id="UP000001981">
    <property type="component" value="Chromosome"/>
</dbReference>
<dbReference type="GO" id="GO:0043531">
    <property type="term" value="F:ADP binding"/>
    <property type="evidence" value="ECO:0007669"/>
    <property type="project" value="UniProtKB-UniRule"/>
</dbReference>
<dbReference type="GO" id="GO:0005524">
    <property type="term" value="F:ATP binding"/>
    <property type="evidence" value="ECO:0007669"/>
    <property type="project" value="InterPro"/>
</dbReference>
<dbReference type="GO" id="GO:0016776">
    <property type="term" value="F:phosphotransferase activity, phosphate group as acceptor"/>
    <property type="evidence" value="ECO:0007669"/>
    <property type="project" value="UniProtKB-UniRule"/>
</dbReference>
<dbReference type="GO" id="GO:0004674">
    <property type="term" value="F:protein serine/threonine kinase activity"/>
    <property type="evidence" value="ECO:0007669"/>
    <property type="project" value="UniProtKB-UniRule"/>
</dbReference>
<dbReference type="HAMAP" id="MF_01062">
    <property type="entry name" value="PSRP"/>
    <property type="match status" value="1"/>
</dbReference>
<dbReference type="InterPro" id="IPR005177">
    <property type="entry name" value="Kinase-pyrophosphorylase"/>
</dbReference>
<dbReference type="InterPro" id="IPR026530">
    <property type="entry name" value="PSRP"/>
</dbReference>
<dbReference type="NCBIfam" id="NF003742">
    <property type="entry name" value="PRK05339.1"/>
    <property type="match status" value="1"/>
</dbReference>
<dbReference type="PANTHER" id="PTHR31756">
    <property type="entry name" value="PYRUVATE, PHOSPHATE DIKINASE REGULATORY PROTEIN 1, CHLOROPLASTIC"/>
    <property type="match status" value="1"/>
</dbReference>
<dbReference type="PANTHER" id="PTHR31756:SF3">
    <property type="entry name" value="PYRUVATE, PHOSPHATE DIKINASE REGULATORY PROTEIN 1, CHLOROPLASTIC"/>
    <property type="match status" value="1"/>
</dbReference>
<dbReference type="Pfam" id="PF03618">
    <property type="entry name" value="Kinase-PPPase"/>
    <property type="match status" value="1"/>
</dbReference>
<comment type="function">
    <text evidence="1">Bifunctional serine/threonine kinase and phosphorylase involved in the regulation of the phosphoenolpyruvate synthase (PEPS) by catalyzing its phosphorylation/dephosphorylation.</text>
</comment>
<comment type="catalytic activity">
    <reaction evidence="1">
        <text>[pyruvate, water dikinase] + ADP = [pyruvate, water dikinase]-phosphate + AMP + H(+)</text>
        <dbReference type="Rhea" id="RHEA:46020"/>
        <dbReference type="Rhea" id="RHEA-COMP:11425"/>
        <dbReference type="Rhea" id="RHEA-COMP:11426"/>
        <dbReference type="ChEBI" id="CHEBI:15378"/>
        <dbReference type="ChEBI" id="CHEBI:43176"/>
        <dbReference type="ChEBI" id="CHEBI:68546"/>
        <dbReference type="ChEBI" id="CHEBI:456215"/>
        <dbReference type="ChEBI" id="CHEBI:456216"/>
        <dbReference type="EC" id="2.7.11.33"/>
    </reaction>
</comment>
<comment type="catalytic activity">
    <reaction evidence="1">
        <text>[pyruvate, water dikinase]-phosphate + phosphate + H(+) = [pyruvate, water dikinase] + diphosphate</text>
        <dbReference type="Rhea" id="RHEA:48580"/>
        <dbReference type="Rhea" id="RHEA-COMP:11425"/>
        <dbReference type="Rhea" id="RHEA-COMP:11426"/>
        <dbReference type="ChEBI" id="CHEBI:15378"/>
        <dbReference type="ChEBI" id="CHEBI:33019"/>
        <dbReference type="ChEBI" id="CHEBI:43176"/>
        <dbReference type="ChEBI" id="CHEBI:43474"/>
        <dbReference type="ChEBI" id="CHEBI:68546"/>
        <dbReference type="EC" id="2.7.4.28"/>
    </reaction>
</comment>
<comment type="similarity">
    <text evidence="1">Belongs to the pyruvate, phosphate/water dikinase regulatory protein family. PSRP subfamily.</text>
</comment>
<gene>
    <name type="ordered locus">Patl_1743</name>
</gene>
<protein>
    <recommendedName>
        <fullName evidence="1">Putative phosphoenolpyruvate synthase regulatory protein</fullName>
        <shortName evidence="1">PEP synthase regulatory protein</shortName>
        <shortName evidence="1">PSRP</shortName>
        <ecNumber evidence="1">2.7.11.33</ecNumber>
        <ecNumber evidence="1">2.7.4.28</ecNumber>
    </recommendedName>
    <alternativeName>
        <fullName evidence="1">Pyruvate, water dikinase regulatory protein</fullName>
    </alternativeName>
</protein>
<proteinExistence type="inferred from homology"/>
<keyword id="KW-0418">Kinase</keyword>
<keyword id="KW-0547">Nucleotide-binding</keyword>
<keyword id="KW-0723">Serine/threonine-protein kinase</keyword>
<keyword id="KW-0808">Transferase</keyword>
<reference key="1">
    <citation type="submission" date="2006-06" db="EMBL/GenBank/DDBJ databases">
        <title>Complete sequence of Pseudoalteromonas atlantica T6c.</title>
        <authorList>
            <consortium name="US DOE Joint Genome Institute"/>
            <person name="Copeland A."/>
            <person name="Lucas S."/>
            <person name="Lapidus A."/>
            <person name="Barry K."/>
            <person name="Detter J.C."/>
            <person name="Glavina del Rio T."/>
            <person name="Hammon N."/>
            <person name="Israni S."/>
            <person name="Dalin E."/>
            <person name="Tice H."/>
            <person name="Pitluck S."/>
            <person name="Saunders E."/>
            <person name="Brettin T."/>
            <person name="Bruce D."/>
            <person name="Han C."/>
            <person name="Tapia R."/>
            <person name="Gilna P."/>
            <person name="Schmutz J."/>
            <person name="Larimer F."/>
            <person name="Land M."/>
            <person name="Hauser L."/>
            <person name="Kyrpides N."/>
            <person name="Kim E."/>
            <person name="Karls A.C."/>
            <person name="Bartlett D."/>
            <person name="Higgins B.P."/>
            <person name="Richardson P."/>
        </authorList>
    </citation>
    <scope>NUCLEOTIDE SEQUENCE [LARGE SCALE GENOMIC DNA]</scope>
    <source>
        <strain>T6c / ATCC BAA-1087</strain>
    </source>
</reference>
<evidence type="ECO:0000255" key="1">
    <source>
        <dbReference type="HAMAP-Rule" id="MF_01062"/>
    </source>
</evidence>
<organism>
    <name type="scientific">Pseudoalteromonas atlantica (strain T6c / ATCC BAA-1087)</name>
    <dbReference type="NCBI Taxonomy" id="3042615"/>
    <lineage>
        <taxon>Bacteria</taxon>
        <taxon>Pseudomonadati</taxon>
        <taxon>Pseudomonadota</taxon>
        <taxon>Gammaproteobacteria</taxon>
        <taxon>Alteromonadales</taxon>
        <taxon>Alteromonadaceae</taxon>
        <taxon>Paraglaciecola</taxon>
    </lineage>
</organism>
<accession>Q15V24</accession>